<keyword id="KW-0067">ATP-binding</keyword>
<keyword id="KW-0106">Calcium</keyword>
<keyword id="KW-0109">Calcium transport</keyword>
<keyword id="KW-0112">Calmodulin-binding</keyword>
<keyword id="KW-0325">Glycoprotein</keyword>
<keyword id="KW-0333">Golgi apparatus</keyword>
<keyword id="KW-0406">Ion transport</keyword>
<keyword id="KW-0460">Magnesium</keyword>
<keyword id="KW-0472">Membrane</keyword>
<keyword id="KW-0479">Metal-binding</keyword>
<keyword id="KW-0547">Nucleotide-binding</keyword>
<keyword id="KW-1185">Reference proteome</keyword>
<keyword id="KW-0346">Stress response</keyword>
<keyword id="KW-1278">Translocase</keyword>
<keyword id="KW-0812">Transmembrane</keyword>
<keyword id="KW-1133">Transmembrane helix</keyword>
<keyword id="KW-0813">Transport</keyword>
<accession>Q7XEK4</accession>
<accession>B9G5R9</accession>
<accession>Q0IXN9</accession>
<accession>Q8S856</accession>
<sequence>MECADYFIGSGRRCSPSTSTSTSREAWRPEKQWRKATNVIRGCHRLLRLGVLSAAAGIMRRNPSYVEIKVHDEGELDVSSGGDGEAPVAFTVAADDESFKGLVKNKREDCFRLLGGGAGVAAVLASGAERGIRGDDADVARRKKAFGSNTYPKPKPKGFFRHVWDALADVFLIVLLVCAAVSLAFGIKEHGIKDGWYDGVSIFLAVFLVAAVSAVSNHSQGKRFDKLARESENIMVSVVRAARRQEVSIFDVVVGDVVVLKIGDVVPADGVFLDGHALQVDESSMTGEPHPVEVDAVKSPFLASGVKVVDGYGKMVVTAVGTDTAWGEMMRTITRENTDPTPLQERLEGLTSSIGKVGIAVAVLVFAVLTARHFTGSTRDEQGNALFDKRNVTFNAVFSGLVGIFQQAVTIIVVAIPEGLPLAVTLTLAFSMKRMVRENALVRRLSACETMGSVTAICTDKTGTLTLNQMKVTEFWVGADRPRSAAAVNGGVVRLLCQGAGLNTTGSVYKPDNVSPPEITGSPTEKALLSWAVEELPMDADALKRKCKVVRVEAFNSDKKRSGVMLRDAATGAVTAHWKGAAEMVLARCTVYVGADGAARELGVEQRRKLEQVINDMAAASLRCIAFAYKQVVDGGDSDNAKIDDEGLTLLGFVGLKDPCRPEVKSAIEACTKAGIAVKMVTGDNVLTARAIAKECGIISGNDDDAAGVVIEGHEFRAMSEQEQLAIVDNIRVMARSLPLDKLVLVQRLKQKGHVVAVTGDGTNDAPALKEADVGLSMGVQGTEVAKESSDIVILNDNFDTVVTATRWGRCVYNNIQKFIQFQLTVNVAALVINFVSAVTTGRMPLTTVQLLWVNLIMDTMGALALATDTPTAGLMRRPPIGRAAPLISNAMWRNLAAQAAYQVAVLLALQYRGFGGAGAGERANGTMIFNAFVLCQVFNEFNAREIERRNVFAGVHRNRMFLGIVAVTVALQVVMVELLTKFAGTERLGWGQWGACVGIAAVSWPIGWAVKCIPVPERPFHEIITARRRRRRST</sequence>
<protein>
    <recommendedName>
        <fullName evidence="6">Calcium-transporting ATPase 7, plasma membrane-type</fullName>
        <shortName evidence="5">OsACA7</shortName>
        <ecNumber evidence="6">7.2.2.10</ecNumber>
    </recommendedName>
    <alternativeName>
        <fullName evidence="6">Ca(2+)-ATPase isoform 7</fullName>
    </alternativeName>
</protein>
<reference key="1">
    <citation type="journal article" date="2003" name="Science">
        <title>In-depth view of structure, activity, and evolution of rice chromosome 10.</title>
        <authorList>
            <person name="Yu Y."/>
            <person name="Rambo T."/>
            <person name="Currie J."/>
            <person name="Saski C."/>
            <person name="Kim H.-R."/>
            <person name="Collura K."/>
            <person name="Thompson S."/>
            <person name="Simmons J."/>
            <person name="Yang T.-J."/>
            <person name="Nah G."/>
            <person name="Patel A.J."/>
            <person name="Thurmond S."/>
            <person name="Henry D."/>
            <person name="Oates R."/>
            <person name="Palmer M."/>
            <person name="Pries G."/>
            <person name="Gibson J."/>
            <person name="Anderson H."/>
            <person name="Paradkar M."/>
            <person name="Crane L."/>
            <person name="Dale J."/>
            <person name="Carver M.B."/>
            <person name="Wood T."/>
            <person name="Frisch D."/>
            <person name="Engler F."/>
            <person name="Soderlund C."/>
            <person name="Palmer L.E."/>
            <person name="Teytelman L."/>
            <person name="Nascimento L."/>
            <person name="De la Bastide M."/>
            <person name="Spiegel L."/>
            <person name="Ware D."/>
            <person name="O'Shaughnessy A."/>
            <person name="Dike S."/>
            <person name="Dedhia N."/>
            <person name="Preston R."/>
            <person name="Huang E."/>
            <person name="Ferraro K."/>
            <person name="Kuit K."/>
            <person name="Miller B."/>
            <person name="Zutavern T."/>
            <person name="Katzenberger F."/>
            <person name="Muller S."/>
            <person name="Balija V."/>
            <person name="Martienssen R.A."/>
            <person name="Stein L."/>
            <person name="Minx P."/>
            <person name="Johnson D."/>
            <person name="Cordum H."/>
            <person name="Mardis E."/>
            <person name="Cheng Z."/>
            <person name="Jiang J."/>
            <person name="Wilson R."/>
            <person name="McCombie W.R."/>
            <person name="Wing R.A."/>
            <person name="Yuan Q."/>
            <person name="Ouyang S."/>
            <person name="Liu J."/>
            <person name="Jones K.M."/>
            <person name="Gansberger K."/>
            <person name="Moffat K."/>
            <person name="Hill J."/>
            <person name="Tsitrin T."/>
            <person name="Overton L."/>
            <person name="Bera J."/>
            <person name="Kim M."/>
            <person name="Jin S."/>
            <person name="Tallon L."/>
            <person name="Ciecko A."/>
            <person name="Pai G."/>
            <person name="Van Aken S."/>
            <person name="Utterback T."/>
            <person name="Reidmuller S."/>
            <person name="Bormann J."/>
            <person name="Feldblyum T."/>
            <person name="Hsiao J."/>
            <person name="Zismann V."/>
            <person name="Blunt S."/>
            <person name="de Vazeille A.R."/>
            <person name="Shaffer T."/>
            <person name="Koo H."/>
            <person name="Suh B."/>
            <person name="Yang Q."/>
            <person name="Haas B."/>
            <person name="Peterson J."/>
            <person name="Pertea M."/>
            <person name="Volfovsky N."/>
            <person name="Wortman J."/>
            <person name="White O."/>
            <person name="Salzberg S.L."/>
            <person name="Fraser C.M."/>
            <person name="Buell C.R."/>
            <person name="Messing J."/>
            <person name="Song R."/>
            <person name="Fuks G."/>
            <person name="Llaca V."/>
            <person name="Kovchak S."/>
            <person name="Young S."/>
            <person name="Bowers J.E."/>
            <person name="Paterson A.H."/>
            <person name="Johns M.A."/>
            <person name="Mao L."/>
            <person name="Pan H."/>
            <person name="Dean R.A."/>
        </authorList>
    </citation>
    <scope>NUCLEOTIDE SEQUENCE [LARGE SCALE GENOMIC DNA]</scope>
    <source>
        <strain>cv. Nipponbare</strain>
    </source>
</reference>
<reference key="2">
    <citation type="journal article" date="2005" name="Nature">
        <title>The map-based sequence of the rice genome.</title>
        <authorList>
            <consortium name="International rice genome sequencing project (IRGSP)"/>
        </authorList>
    </citation>
    <scope>NUCLEOTIDE SEQUENCE [LARGE SCALE GENOMIC DNA]</scope>
    <source>
        <strain>cv. Nipponbare</strain>
    </source>
</reference>
<reference key="3">
    <citation type="journal article" date="2008" name="Nucleic Acids Res.">
        <title>The rice annotation project database (RAP-DB): 2008 update.</title>
        <authorList>
            <consortium name="The rice annotation project (RAP)"/>
        </authorList>
    </citation>
    <scope>GENOME REANNOTATION</scope>
    <source>
        <strain>cv. Nipponbare</strain>
    </source>
</reference>
<reference key="4">
    <citation type="journal article" date="2013" name="Rice">
        <title>Improvement of the Oryza sativa Nipponbare reference genome using next generation sequence and optical map data.</title>
        <authorList>
            <person name="Kawahara Y."/>
            <person name="de la Bastide M."/>
            <person name="Hamilton J.P."/>
            <person name="Kanamori H."/>
            <person name="McCombie W.R."/>
            <person name="Ouyang S."/>
            <person name="Schwartz D.C."/>
            <person name="Tanaka T."/>
            <person name="Wu J."/>
            <person name="Zhou S."/>
            <person name="Childs K.L."/>
            <person name="Davidson R.M."/>
            <person name="Lin H."/>
            <person name="Quesada-Ocampo L."/>
            <person name="Vaillancourt B."/>
            <person name="Sakai H."/>
            <person name="Lee S.S."/>
            <person name="Kim J."/>
            <person name="Numa H."/>
            <person name="Itoh T."/>
            <person name="Buell C.R."/>
            <person name="Matsumoto T."/>
        </authorList>
    </citation>
    <scope>GENOME REANNOTATION</scope>
    <source>
        <strain>cv. Nipponbare</strain>
    </source>
</reference>
<reference key="5">
    <citation type="journal article" date="2005" name="PLoS Biol.">
        <title>The genomes of Oryza sativa: a history of duplications.</title>
        <authorList>
            <person name="Yu J."/>
            <person name="Wang J."/>
            <person name="Lin W."/>
            <person name="Li S."/>
            <person name="Li H."/>
            <person name="Zhou J."/>
            <person name="Ni P."/>
            <person name="Dong W."/>
            <person name="Hu S."/>
            <person name="Zeng C."/>
            <person name="Zhang J."/>
            <person name="Zhang Y."/>
            <person name="Li R."/>
            <person name="Xu Z."/>
            <person name="Li S."/>
            <person name="Li X."/>
            <person name="Zheng H."/>
            <person name="Cong L."/>
            <person name="Lin L."/>
            <person name="Yin J."/>
            <person name="Geng J."/>
            <person name="Li G."/>
            <person name="Shi J."/>
            <person name="Liu J."/>
            <person name="Lv H."/>
            <person name="Li J."/>
            <person name="Wang J."/>
            <person name="Deng Y."/>
            <person name="Ran L."/>
            <person name="Shi X."/>
            <person name="Wang X."/>
            <person name="Wu Q."/>
            <person name="Li C."/>
            <person name="Ren X."/>
            <person name="Wang J."/>
            <person name="Wang X."/>
            <person name="Li D."/>
            <person name="Liu D."/>
            <person name="Zhang X."/>
            <person name="Ji Z."/>
            <person name="Zhao W."/>
            <person name="Sun Y."/>
            <person name="Zhang Z."/>
            <person name="Bao J."/>
            <person name="Han Y."/>
            <person name="Dong L."/>
            <person name="Ji J."/>
            <person name="Chen P."/>
            <person name="Wu S."/>
            <person name="Liu J."/>
            <person name="Xiao Y."/>
            <person name="Bu D."/>
            <person name="Tan J."/>
            <person name="Yang L."/>
            <person name="Ye C."/>
            <person name="Zhang J."/>
            <person name="Xu J."/>
            <person name="Zhou Y."/>
            <person name="Yu Y."/>
            <person name="Zhang B."/>
            <person name="Zhuang S."/>
            <person name="Wei H."/>
            <person name="Liu B."/>
            <person name="Lei M."/>
            <person name="Yu H."/>
            <person name="Li Y."/>
            <person name="Xu H."/>
            <person name="Wei S."/>
            <person name="He X."/>
            <person name="Fang L."/>
            <person name="Zhang Z."/>
            <person name="Zhang Y."/>
            <person name="Huang X."/>
            <person name="Su Z."/>
            <person name="Tong W."/>
            <person name="Li J."/>
            <person name="Tong Z."/>
            <person name="Li S."/>
            <person name="Ye J."/>
            <person name="Wang L."/>
            <person name="Fang L."/>
            <person name="Lei T."/>
            <person name="Chen C.-S."/>
            <person name="Chen H.-C."/>
            <person name="Xu Z."/>
            <person name="Li H."/>
            <person name="Huang H."/>
            <person name="Zhang F."/>
            <person name="Xu H."/>
            <person name="Li N."/>
            <person name="Zhao C."/>
            <person name="Li S."/>
            <person name="Dong L."/>
            <person name="Huang Y."/>
            <person name="Li L."/>
            <person name="Xi Y."/>
            <person name="Qi Q."/>
            <person name="Li W."/>
            <person name="Zhang B."/>
            <person name="Hu W."/>
            <person name="Zhang Y."/>
            <person name="Tian X."/>
            <person name="Jiao Y."/>
            <person name="Liang X."/>
            <person name="Jin J."/>
            <person name="Gao L."/>
            <person name="Zheng W."/>
            <person name="Hao B."/>
            <person name="Liu S.-M."/>
            <person name="Wang W."/>
            <person name="Yuan L."/>
            <person name="Cao M."/>
            <person name="McDermott J."/>
            <person name="Samudrala R."/>
            <person name="Wang J."/>
            <person name="Wong G.K.-S."/>
            <person name="Yang H."/>
        </authorList>
    </citation>
    <scope>NUCLEOTIDE SEQUENCE [LARGE SCALE GENOMIC DNA]</scope>
    <source>
        <strain>cv. Nipponbare</strain>
    </source>
</reference>
<reference key="6">
    <citation type="journal article" date="2014" name="FEBS J.">
        <title>Genome-wide expressional and functional analysis of calcium transport elements during abiotic stress and development in rice.</title>
        <authorList>
            <person name="Singh A."/>
            <person name="Kanwar P."/>
            <person name="Yadav A.K."/>
            <person name="Mishra M."/>
            <person name="Jha S.K."/>
            <person name="Baranwal V."/>
            <person name="Pandey A."/>
            <person name="Kapoor S."/>
            <person name="Tyagi A.K."/>
            <person name="Pandey G.K."/>
        </authorList>
    </citation>
    <scope>FUNCTION</scope>
    <scope>SUBCELLULAR LOCATION</scope>
    <scope>INDUCTION BY COLD STRESS</scope>
    <scope>GENE FAMILY</scope>
    <scope>NOMENCLATURE</scope>
</reference>
<feature type="chain" id="PRO_0000439591" description="Calcium-transporting ATPase 7, plasma membrane-type">
    <location>
        <begin position="1"/>
        <end position="1035"/>
    </location>
</feature>
<feature type="topological domain" description="Cytoplasmic" evidence="6">
    <location>
        <begin position="1"/>
        <end position="166"/>
    </location>
</feature>
<feature type="transmembrane region" description="Helical" evidence="2">
    <location>
        <begin position="167"/>
        <end position="187"/>
    </location>
</feature>
<feature type="topological domain" description="Extracellular" evidence="6">
    <location>
        <begin position="188"/>
        <end position="194"/>
    </location>
</feature>
<feature type="transmembrane region" description="Helical" evidence="2">
    <location>
        <begin position="195"/>
        <end position="215"/>
    </location>
</feature>
<feature type="topological domain" description="Cytoplasmic" evidence="6">
    <location>
        <begin position="216"/>
        <end position="348"/>
    </location>
</feature>
<feature type="transmembrane region" description="Helical" evidence="2">
    <location>
        <begin position="349"/>
        <end position="369"/>
    </location>
</feature>
<feature type="topological domain" description="Extracellular" evidence="6">
    <location>
        <begin position="370"/>
        <end position="395"/>
    </location>
</feature>
<feature type="transmembrane region" description="Helical" evidence="2">
    <location>
        <begin position="396"/>
        <end position="416"/>
    </location>
</feature>
<feature type="topological domain" description="Cytoplasmic" evidence="6">
    <location>
        <begin position="417"/>
        <end position="818"/>
    </location>
</feature>
<feature type="transmembrane region" description="Helical" evidence="2">
    <location>
        <begin position="819"/>
        <end position="839"/>
    </location>
</feature>
<feature type="topological domain" description="Extracellular" evidence="6">
    <location>
        <begin position="840"/>
        <end position="845"/>
    </location>
</feature>
<feature type="transmembrane region" description="Helical" evidence="2">
    <location>
        <begin position="846"/>
        <end position="866"/>
    </location>
</feature>
<feature type="topological domain" description="Cytoplasmic" evidence="6">
    <location>
        <begin position="867"/>
        <end position="887"/>
    </location>
</feature>
<feature type="transmembrane region" description="Helical" evidence="2">
    <location>
        <begin position="888"/>
        <end position="910"/>
    </location>
</feature>
<feature type="topological domain" description="Extracellular" evidence="6">
    <location>
        <begin position="911"/>
        <end position="919"/>
    </location>
</feature>
<feature type="transmembrane region" description="Helical" evidence="2">
    <location>
        <begin position="920"/>
        <end position="940"/>
    </location>
</feature>
<feature type="topological domain" description="Cytoplasmic" evidence="6">
    <location>
        <begin position="941"/>
        <end position="960"/>
    </location>
</feature>
<feature type="transmembrane region" description="Helical" evidence="2">
    <location>
        <begin position="961"/>
        <end position="981"/>
    </location>
</feature>
<feature type="topological domain" description="Extracellular" evidence="6">
    <location>
        <begin position="982"/>
        <end position="990"/>
    </location>
</feature>
<feature type="transmembrane region" description="Helical" evidence="2">
    <location>
        <begin position="991"/>
        <end position="1011"/>
    </location>
</feature>
<feature type="topological domain" description="Cytoplasmic" evidence="6">
    <location>
        <begin position="1012"/>
        <end position="1035"/>
    </location>
</feature>
<feature type="active site" description="4-aspartylphosphate intermediate" evidence="1">
    <location>
        <position position="460"/>
    </location>
</feature>
<feature type="binding site" evidence="1">
    <location>
        <position position="761"/>
    </location>
    <ligand>
        <name>Mg(2+)</name>
        <dbReference type="ChEBI" id="CHEBI:18420"/>
    </ligand>
</feature>
<feature type="binding site" evidence="1">
    <location>
        <position position="765"/>
    </location>
    <ligand>
        <name>Mg(2+)</name>
        <dbReference type="ChEBI" id="CHEBI:18420"/>
    </ligand>
</feature>
<feature type="glycosylation site" description="N-linked (GlcNAc...) asparagine" evidence="3">
    <location>
        <position position="391"/>
    </location>
</feature>
<evidence type="ECO:0000250" key="1"/>
<evidence type="ECO:0000255" key="2"/>
<evidence type="ECO:0000255" key="3">
    <source>
        <dbReference type="PROSITE-ProRule" id="PRU00498"/>
    </source>
</evidence>
<evidence type="ECO:0000269" key="4">
    <source>
    </source>
</evidence>
<evidence type="ECO:0000303" key="5">
    <source>
    </source>
</evidence>
<evidence type="ECO:0000305" key="6"/>
<evidence type="ECO:0000312" key="7">
    <source>
        <dbReference type="EMBL" id="AAM08790.1"/>
    </source>
</evidence>
<evidence type="ECO:0000312" key="8">
    <source>
        <dbReference type="EMBL" id="AAP53785.1"/>
    </source>
</evidence>
<evidence type="ECO:0000312" key="9">
    <source>
        <dbReference type="EMBL" id="BAT10869.1"/>
    </source>
</evidence>
<evidence type="ECO:0000312" key="10">
    <source>
        <dbReference type="EMBL" id="EEE50966.1"/>
    </source>
</evidence>
<comment type="function">
    <text evidence="1 4">This magnesium-dependent enzyme catalyzes the hydrolysis of ATP coupled with the translocation of calcium from the cytosol out of the cell, into the endoplasmic reticulum, or into organelles (By similarity). Involved in salt stress tolerance (PubMed:24286292).</text>
</comment>
<comment type="catalytic activity">
    <reaction evidence="6">
        <text>Ca(2+)(in) + ATP + H2O = Ca(2+)(out) + ADP + phosphate + H(+)</text>
        <dbReference type="Rhea" id="RHEA:18105"/>
        <dbReference type="ChEBI" id="CHEBI:15377"/>
        <dbReference type="ChEBI" id="CHEBI:15378"/>
        <dbReference type="ChEBI" id="CHEBI:29108"/>
        <dbReference type="ChEBI" id="CHEBI:30616"/>
        <dbReference type="ChEBI" id="CHEBI:43474"/>
        <dbReference type="ChEBI" id="CHEBI:456216"/>
        <dbReference type="EC" id="7.2.2.10"/>
    </reaction>
</comment>
<comment type="activity regulation">
    <text evidence="1">Activated by calmodulin.</text>
</comment>
<comment type="subcellular location">
    <subcellularLocation>
        <location evidence="4">Golgi apparatus membrane</location>
        <topology evidence="2">Multi-pass membrane protein</topology>
    </subcellularLocation>
</comment>
<comment type="induction">
    <text evidence="4">Induced by cold stress.</text>
</comment>
<comment type="domain">
    <text evidence="1">The N-terminus contains an autoinhibitory calmodulin-binding domain, which binds calmodulin in a calcium-dependent fashion.</text>
</comment>
<comment type="similarity">
    <text evidence="6">Belongs to the cation transport ATPase (P-type) (TC 3.A.3) family. Type IIB subfamily.</text>
</comment>
<comment type="sequence caution" evidence="6">
    <conflict type="erroneous initiation">
        <sequence resource="EMBL-CDS" id="BAF26526"/>
    </conflict>
    <text>Truncated N-terminus.</text>
</comment>
<comment type="sequence caution" evidence="6">
    <conflict type="erroneous initiation">
        <sequence resource="EMBL-CDS" id="BAT10869"/>
    </conflict>
    <text>Truncated N-terminus.</text>
</comment>
<comment type="sequence caution" evidence="6">
    <conflict type="erroneous initiation">
        <sequence resource="EMBL-CDS" id="EEE50966"/>
    </conflict>
    <text>Truncated N-terminus.</text>
</comment>
<organism>
    <name type="scientific">Oryza sativa subsp. japonica</name>
    <name type="common">Rice</name>
    <dbReference type="NCBI Taxonomy" id="39947"/>
    <lineage>
        <taxon>Eukaryota</taxon>
        <taxon>Viridiplantae</taxon>
        <taxon>Streptophyta</taxon>
        <taxon>Embryophyta</taxon>
        <taxon>Tracheophyta</taxon>
        <taxon>Spermatophyta</taxon>
        <taxon>Magnoliopsida</taxon>
        <taxon>Liliopsida</taxon>
        <taxon>Poales</taxon>
        <taxon>Poaceae</taxon>
        <taxon>BOP clade</taxon>
        <taxon>Oryzoideae</taxon>
        <taxon>Oryzeae</taxon>
        <taxon>Oryzinae</taxon>
        <taxon>Oryza</taxon>
        <taxon>Oryza sativa</taxon>
    </lineage>
</organism>
<proteinExistence type="evidence at transcript level"/>
<gene>
    <name evidence="5" type="primary">ACA7</name>
    <name evidence="9" type="ordered locus">Os10g0418100</name>
    <name evidence="8" type="ordered locus">LOC_Os10g28240</name>
    <name evidence="10" type="ORF">OsJ_31537</name>
    <name evidence="7" type="ORF">OSJNBa0061K21.21</name>
</gene>
<name>ACA7_ORYSJ</name>
<dbReference type="EC" id="7.2.2.10" evidence="6"/>
<dbReference type="EMBL" id="AC016780">
    <property type="protein sequence ID" value="AAM08790.1"/>
    <property type="molecule type" value="Genomic_DNA"/>
</dbReference>
<dbReference type="EMBL" id="DP000086">
    <property type="protein sequence ID" value="AAP53785.1"/>
    <property type="molecule type" value="Genomic_DNA"/>
</dbReference>
<dbReference type="EMBL" id="AP008216">
    <property type="protein sequence ID" value="BAF26526.1"/>
    <property type="status" value="ALT_INIT"/>
    <property type="molecule type" value="Genomic_DNA"/>
</dbReference>
<dbReference type="EMBL" id="AP014966">
    <property type="protein sequence ID" value="BAT10869.1"/>
    <property type="status" value="ALT_INIT"/>
    <property type="molecule type" value="Genomic_DNA"/>
</dbReference>
<dbReference type="EMBL" id="CM000147">
    <property type="protein sequence ID" value="EEE50966.1"/>
    <property type="status" value="ALT_INIT"/>
    <property type="molecule type" value="Genomic_DNA"/>
</dbReference>
<dbReference type="RefSeq" id="XP_015613068.1">
    <property type="nucleotide sequence ID" value="XM_015757582.1"/>
</dbReference>
<dbReference type="SMR" id="Q7XEK4"/>
<dbReference type="FunCoup" id="Q7XEK4">
    <property type="interactions" value="1803"/>
</dbReference>
<dbReference type="STRING" id="39947.Q7XEK4"/>
<dbReference type="GlyCosmos" id="Q7XEK4">
    <property type="glycosylation" value="1 site, No reported glycans"/>
</dbReference>
<dbReference type="PaxDb" id="39947-Q7XEK4"/>
<dbReference type="EnsemblPlants" id="Os10t0418100-01">
    <property type="protein sequence ID" value="Os10t0418100-01"/>
    <property type="gene ID" value="Os10g0418100"/>
</dbReference>
<dbReference type="Gramene" id="Os10t0418100-01">
    <property type="protein sequence ID" value="Os10t0418100-01"/>
    <property type="gene ID" value="Os10g0418100"/>
</dbReference>
<dbReference type="KEGG" id="dosa:Os10g0418100"/>
<dbReference type="eggNOG" id="KOG0204">
    <property type="taxonomic scope" value="Eukaryota"/>
</dbReference>
<dbReference type="InParanoid" id="Q7XEK4"/>
<dbReference type="OrthoDB" id="3352408at2759"/>
<dbReference type="Proteomes" id="UP000000763">
    <property type="component" value="Chromosome 10"/>
</dbReference>
<dbReference type="Proteomes" id="UP000007752">
    <property type="component" value="Chromosome 10"/>
</dbReference>
<dbReference type="Proteomes" id="UP000059680">
    <property type="component" value="Chromosome 10"/>
</dbReference>
<dbReference type="GO" id="GO:0000139">
    <property type="term" value="C:Golgi membrane"/>
    <property type="evidence" value="ECO:0007669"/>
    <property type="project" value="UniProtKB-SubCell"/>
</dbReference>
<dbReference type="GO" id="GO:0043231">
    <property type="term" value="C:intracellular membrane-bounded organelle"/>
    <property type="evidence" value="ECO:0000318"/>
    <property type="project" value="GO_Central"/>
</dbReference>
<dbReference type="GO" id="GO:0005886">
    <property type="term" value="C:plasma membrane"/>
    <property type="evidence" value="ECO:0000318"/>
    <property type="project" value="GO_Central"/>
</dbReference>
<dbReference type="GO" id="GO:0005524">
    <property type="term" value="F:ATP binding"/>
    <property type="evidence" value="ECO:0007669"/>
    <property type="project" value="UniProtKB-KW"/>
</dbReference>
<dbReference type="GO" id="GO:0016887">
    <property type="term" value="F:ATP hydrolysis activity"/>
    <property type="evidence" value="ECO:0007669"/>
    <property type="project" value="InterPro"/>
</dbReference>
<dbReference type="GO" id="GO:0005516">
    <property type="term" value="F:calmodulin binding"/>
    <property type="evidence" value="ECO:0007669"/>
    <property type="project" value="UniProtKB-KW"/>
</dbReference>
<dbReference type="GO" id="GO:0046872">
    <property type="term" value="F:metal ion binding"/>
    <property type="evidence" value="ECO:0007669"/>
    <property type="project" value="UniProtKB-KW"/>
</dbReference>
<dbReference type="GO" id="GO:0005388">
    <property type="term" value="F:P-type calcium transporter activity"/>
    <property type="evidence" value="ECO:0000318"/>
    <property type="project" value="GO_Central"/>
</dbReference>
<dbReference type="FunFam" id="3.40.1110.10:FF:000357">
    <property type="match status" value="1"/>
</dbReference>
<dbReference type="FunFam" id="1.20.1110.10:FF:000039">
    <property type="entry name" value="Calcium-transporting ATPase"/>
    <property type="match status" value="1"/>
</dbReference>
<dbReference type="FunFam" id="2.70.150.10:FF:000006">
    <property type="entry name" value="Calcium-transporting ATPase"/>
    <property type="match status" value="1"/>
</dbReference>
<dbReference type="FunFam" id="3.40.50.1000:FF:000018">
    <property type="entry name" value="Calcium-transporting ATPase"/>
    <property type="match status" value="1"/>
</dbReference>
<dbReference type="FunFam" id="1.20.1110.10:FF:000097">
    <property type="entry name" value="Calcium-transporting ATPase 9 plasma membrane-type"/>
    <property type="match status" value="1"/>
</dbReference>
<dbReference type="Gene3D" id="3.40.1110.10">
    <property type="entry name" value="Calcium-transporting ATPase, cytoplasmic domain N"/>
    <property type="match status" value="1"/>
</dbReference>
<dbReference type="Gene3D" id="2.70.150.10">
    <property type="entry name" value="Calcium-transporting ATPase, cytoplasmic transduction domain A"/>
    <property type="match status" value="1"/>
</dbReference>
<dbReference type="Gene3D" id="1.20.1110.10">
    <property type="entry name" value="Calcium-transporting ATPase, transmembrane domain"/>
    <property type="match status" value="1"/>
</dbReference>
<dbReference type="Gene3D" id="3.40.50.1000">
    <property type="entry name" value="HAD superfamily/HAD-like"/>
    <property type="match status" value="1"/>
</dbReference>
<dbReference type="InterPro" id="IPR006068">
    <property type="entry name" value="ATPase_P-typ_cation-transptr_C"/>
</dbReference>
<dbReference type="InterPro" id="IPR004014">
    <property type="entry name" value="ATPase_P-typ_cation-transptr_N"/>
</dbReference>
<dbReference type="InterPro" id="IPR023299">
    <property type="entry name" value="ATPase_P-typ_cyto_dom_N"/>
</dbReference>
<dbReference type="InterPro" id="IPR018303">
    <property type="entry name" value="ATPase_P-typ_P_site"/>
</dbReference>
<dbReference type="InterPro" id="IPR023298">
    <property type="entry name" value="ATPase_P-typ_TM_dom_sf"/>
</dbReference>
<dbReference type="InterPro" id="IPR008250">
    <property type="entry name" value="ATPase_P-typ_transduc_dom_A_sf"/>
</dbReference>
<dbReference type="InterPro" id="IPR036412">
    <property type="entry name" value="HAD-like_sf"/>
</dbReference>
<dbReference type="InterPro" id="IPR023214">
    <property type="entry name" value="HAD_sf"/>
</dbReference>
<dbReference type="InterPro" id="IPR006408">
    <property type="entry name" value="P-type_ATPase_IIB"/>
</dbReference>
<dbReference type="InterPro" id="IPR001757">
    <property type="entry name" value="P_typ_ATPase"/>
</dbReference>
<dbReference type="InterPro" id="IPR044492">
    <property type="entry name" value="P_typ_ATPase_HD_dom"/>
</dbReference>
<dbReference type="NCBIfam" id="TIGR01517">
    <property type="entry name" value="ATPase-IIB_Ca"/>
    <property type="match status" value="1"/>
</dbReference>
<dbReference type="NCBIfam" id="TIGR01494">
    <property type="entry name" value="ATPase_P-type"/>
    <property type="match status" value="2"/>
</dbReference>
<dbReference type="PANTHER" id="PTHR24093:SF434">
    <property type="entry name" value="CALCIUM-TRANSPORTING ATPASE 13, PLASMA MEMBRANE-TYPE-RELATED"/>
    <property type="match status" value="1"/>
</dbReference>
<dbReference type="PANTHER" id="PTHR24093">
    <property type="entry name" value="CATION TRANSPORTING ATPASE"/>
    <property type="match status" value="1"/>
</dbReference>
<dbReference type="Pfam" id="PF00689">
    <property type="entry name" value="Cation_ATPase_C"/>
    <property type="match status" value="1"/>
</dbReference>
<dbReference type="Pfam" id="PF00690">
    <property type="entry name" value="Cation_ATPase_N"/>
    <property type="match status" value="1"/>
</dbReference>
<dbReference type="Pfam" id="PF00122">
    <property type="entry name" value="E1-E2_ATPase"/>
    <property type="match status" value="1"/>
</dbReference>
<dbReference type="Pfam" id="PF00702">
    <property type="entry name" value="Hydrolase"/>
    <property type="match status" value="1"/>
</dbReference>
<dbReference type="PRINTS" id="PR00119">
    <property type="entry name" value="CATATPASE"/>
</dbReference>
<dbReference type="PRINTS" id="PR00120">
    <property type="entry name" value="HATPASE"/>
</dbReference>
<dbReference type="SFLD" id="SFLDS00003">
    <property type="entry name" value="Haloacid_Dehalogenase"/>
    <property type="match status" value="1"/>
</dbReference>
<dbReference type="SFLD" id="SFLDF00027">
    <property type="entry name" value="p-type_atpase"/>
    <property type="match status" value="1"/>
</dbReference>
<dbReference type="SMART" id="SM00831">
    <property type="entry name" value="Cation_ATPase_N"/>
    <property type="match status" value="1"/>
</dbReference>
<dbReference type="SUPFAM" id="SSF81653">
    <property type="entry name" value="Calcium ATPase, transduction domain A"/>
    <property type="match status" value="1"/>
</dbReference>
<dbReference type="SUPFAM" id="SSF81665">
    <property type="entry name" value="Calcium ATPase, transmembrane domain M"/>
    <property type="match status" value="1"/>
</dbReference>
<dbReference type="SUPFAM" id="SSF56784">
    <property type="entry name" value="HAD-like"/>
    <property type="match status" value="1"/>
</dbReference>
<dbReference type="SUPFAM" id="SSF81660">
    <property type="entry name" value="Metal cation-transporting ATPase, ATP-binding domain N"/>
    <property type="match status" value="1"/>
</dbReference>
<dbReference type="PROSITE" id="PS00154">
    <property type="entry name" value="ATPASE_E1_E2"/>
    <property type="match status" value="1"/>
</dbReference>